<comment type="function">
    <text evidence="3">Actin is a highly conserved protein that polymerizes to produce filaments that form cross-linked networks in the cytoplasm of cells. Actin exists in both monomeric (G-actin) and polymeric (F-actin) forms, both forms playing key functions, such as cell motility and contraction. In addition to their role in the cytoplasmic cytoskeleton, G- and F-actin also localize in the nucleus, and regulate gene transcription and motility and repair of damaged DNA.</text>
</comment>
<comment type="catalytic activity">
    <reaction evidence="5">
        <text>ATP + H2O = ADP + phosphate + H(+)</text>
        <dbReference type="Rhea" id="RHEA:13065"/>
        <dbReference type="ChEBI" id="CHEBI:15377"/>
        <dbReference type="ChEBI" id="CHEBI:15378"/>
        <dbReference type="ChEBI" id="CHEBI:30616"/>
        <dbReference type="ChEBI" id="CHEBI:43474"/>
        <dbReference type="ChEBI" id="CHEBI:456216"/>
    </reaction>
</comment>
<comment type="subunit">
    <text evidence="3 4">Polymerization of globular actin (G-actin) leads to a structural filament (F-actin) in the form of a two-stranded helix (By similarity). Each actin can bind to 4 others (By similarity).</text>
</comment>
<comment type="subcellular location">
    <subcellularLocation>
        <location evidence="4">Cytoplasm</location>
        <location evidence="4">Cytoskeleton</location>
    </subcellularLocation>
    <subcellularLocation>
        <location evidence="1">Nucleus</location>
    </subcellularLocation>
</comment>
<comment type="PTM">
    <molecule>Actin, cytoplasmic 1</molecule>
    <text evidence="3">N-terminal cleavage of acetylated methionine of immature cytoplasmic actin by ACTMAP.</text>
</comment>
<comment type="PTM">
    <text evidence="4">Oxidation of Met-44 and Met-47 by MICALs (mical1, mical2 or mical3) to form methionine sulfoxide promotes actin filament depolymerization. Mical1 and mical2 produce the (R)-S-oxide form. The (R)-S-oxide form is reverted by msrb1 and msrb2, which promote actin repolymerization.</text>
</comment>
<comment type="PTM">
    <text evidence="2">Methylation at His-73 by SETD3. Methylation stabilizes actin filaments.</text>
</comment>
<comment type="miscellaneous">
    <text evidence="1">In vertebrates 3 main groups of actin isoforms, alpha, beta and gamma have been identified. The alpha actins are found in muscle tissues and are a major constituent of the contractile apparatus. The beta and gamma actins coexist in most cell types as components of the cytoskeleton and as mediators of internal cell motility.</text>
</comment>
<comment type="similarity">
    <text evidence="6">Belongs to the actin family.</text>
</comment>
<proteinExistence type="evidence at transcript level"/>
<name>ACTB_SALSA</name>
<feature type="chain" id="PRO_0000367093" description="Actin, cytoplasmic 1">
    <location>
        <begin position="1"/>
        <end position="375"/>
    </location>
</feature>
<feature type="initiator methionine" description="Removed; alternate" evidence="2">
    <location>
        <position position="1"/>
    </location>
</feature>
<feature type="chain" id="PRO_0000000807" description="Actin, cytoplasmic 1, N-terminally processed">
    <location>
        <begin position="2"/>
        <end position="375"/>
    </location>
</feature>
<feature type="modified residue" description="N-acetylmethionine; in Actin, cytoplasmic 1; alternate" evidence="2">
    <location>
        <position position="1"/>
    </location>
</feature>
<feature type="modified residue" description="N-acetylglutamate; in Actin, cytoplasmic 1, N-terminally processed" evidence="2">
    <location>
        <position position="2"/>
    </location>
</feature>
<feature type="modified residue" description="Methionine (R)-sulfoxide" evidence="4">
    <location>
        <position position="44"/>
    </location>
</feature>
<feature type="modified residue" description="Methionine (R)-sulfoxide" evidence="4">
    <location>
        <position position="47"/>
    </location>
</feature>
<feature type="modified residue" description="Tele-methylhistidine" evidence="4">
    <location>
        <position position="73"/>
    </location>
</feature>
<gene>
    <name type="primary">actb</name>
</gene>
<evidence type="ECO:0000250" key="1">
    <source>
        <dbReference type="UniProtKB" id="O93400"/>
    </source>
</evidence>
<evidence type="ECO:0000250" key="2">
    <source>
        <dbReference type="UniProtKB" id="P60706"/>
    </source>
</evidence>
<evidence type="ECO:0000250" key="3">
    <source>
        <dbReference type="UniProtKB" id="P60709"/>
    </source>
</evidence>
<evidence type="ECO:0000250" key="4">
    <source>
        <dbReference type="UniProtKB" id="P60710"/>
    </source>
</evidence>
<evidence type="ECO:0000250" key="5">
    <source>
        <dbReference type="UniProtKB" id="P68137"/>
    </source>
</evidence>
<evidence type="ECO:0000305" key="6"/>
<accession>O42161</accession>
<keyword id="KW-0007">Acetylation</keyword>
<keyword id="KW-0067">ATP-binding</keyword>
<keyword id="KW-0963">Cytoplasm</keyword>
<keyword id="KW-0206">Cytoskeleton</keyword>
<keyword id="KW-0378">Hydrolase</keyword>
<keyword id="KW-0488">Methylation</keyword>
<keyword id="KW-0547">Nucleotide-binding</keyword>
<keyword id="KW-0539">Nucleus</keyword>
<keyword id="KW-0558">Oxidation</keyword>
<keyword id="KW-1185">Reference proteome</keyword>
<organism>
    <name type="scientific">Salmo salar</name>
    <name type="common">Atlantic salmon</name>
    <dbReference type="NCBI Taxonomy" id="8030"/>
    <lineage>
        <taxon>Eukaryota</taxon>
        <taxon>Metazoa</taxon>
        <taxon>Chordata</taxon>
        <taxon>Craniata</taxon>
        <taxon>Vertebrata</taxon>
        <taxon>Euteleostomi</taxon>
        <taxon>Actinopterygii</taxon>
        <taxon>Neopterygii</taxon>
        <taxon>Teleostei</taxon>
        <taxon>Protacanthopterygii</taxon>
        <taxon>Salmoniformes</taxon>
        <taxon>Salmonidae</taxon>
        <taxon>Salmoninae</taxon>
        <taxon>Salmo</taxon>
    </lineage>
</organism>
<dbReference type="EC" id="3.6.4.-" evidence="5"/>
<dbReference type="EMBL" id="AF012125">
    <property type="protein sequence ID" value="AAB65430.1"/>
    <property type="molecule type" value="mRNA"/>
</dbReference>
<dbReference type="RefSeq" id="NP_001116997.1">
    <property type="nucleotide sequence ID" value="NM_001123525.1"/>
</dbReference>
<dbReference type="RefSeq" id="XP_014050011.1">
    <property type="nucleotide sequence ID" value="XM_014194536.1"/>
</dbReference>
<dbReference type="RefSeq" id="XP_014050012.1">
    <property type="nucleotide sequence ID" value="XM_014194537.1"/>
</dbReference>
<dbReference type="SMR" id="O42161"/>
<dbReference type="STRING" id="8030.ENSSSAP00000016461"/>
<dbReference type="PaxDb" id="8030-ENSSSAP00000016461"/>
<dbReference type="Ensembl" id="ENSSSAT00070006208">
    <property type="protein sequence ID" value="ENSSSAP00070005781"/>
    <property type="gene ID" value="ENSSSAG00070004173"/>
</dbReference>
<dbReference type="GeneID" id="100136352"/>
<dbReference type="KEGG" id="sasa:100136352"/>
<dbReference type="OrthoDB" id="134595at7898"/>
<dbReference type="Proteomes" id="UP000087266">
    <property type="component" value="Chromosome ssa03"/>
</dbReference>
<dbReference type="Bgee" id="ENSSSAG00000001782">
    <property type="expression patterns" value="Expressed in head kidney and 26 other cell types or tissues"/>
</dbReference>
<dbReference type="GO" id="GO:0015629">
    <property type="term" value="C:actin cytoskeleton"/>
    <property type="evidence" value="ECO:0000250"/>
    <property type="project" value="UniProtKB"/>
</dbReference>
<dbReference type="GO" id="GO:0005737">
    <property type="term" value="C:cytoplasm"/>
    <property type="evidence" value="ECO:0007669"/>
    <property type="project" value="UniProtKB-KW"/>
</dbReference>
<dbReference type="GO" id="GO:0005634">
    <property type="term" value="C:nucleus"/>
    <property type="evidence" value="ECO:0000250"/>
    <property type="project" value="UniProtKB"/>
</dbReference>
<dbReference type="GO" id="GO:0005886">
    <property type="term" value="C:plasma membrane"/>
    <property type="evidence" value="ECO:0000250"/>
    <property type="project" value="AgBase"/>
</dbReference>
<dbReference type="GO" id="GO:0005524">
    <property type="term" value="F:ATP binding"/>
    <property type="evidence" value="ECO:0007669"/>
    <property type="project" value="UniProtKB-KW"/>
</dbReference>
<dbReference type="GO" id="GO:0016787">
    <property type="term" value="F:hydrolase activity"/>
    <property type="evidence" value="ECO:0007669"/>
    <property type="project" value="UniProtKB-KW"/>
</dbReference>
<dbReference type="CDD" id="cd10224">
    <property type="entry name" value="ASKHA_NBD_actin"/>
    <property type="match status" value="1"/>
</dbReference>
<dbReference type="FunFam" id="3.30.420.40:FF:000131">
    <property type="entry name" value="Actin, alpha skeletal muscle"/>
    <property type="match status" value="1"/>
</dbReference>
<dbReference type="FunFam" id="3.30.420.40:FF:000291">
    <property type="entry name" value="Actin, alpha skeletal muscle"/>
    <property type="match status" value="1"/>
</dbReference>
<dbReference type="FunFam" id="3.90.640.10:FF:000047">
    <property type="entry name" value="Actin, alpha skeletal muscle"/>
    <property type="match status" value="1"/>
</dbReference>
<dbReference type="FunFam" id="3.30.420.40:FF:000058">
    <property type="entry name" value="Putative actin-related protein 5"/>
    <property type="match status" value="1"/>
</dbReference>
<dbReference type="Gene3D" id="3.30.420.40">
    <property type="match status" value="2"/>
</dbReference>
<dbReference type="Gene3D" id="3.90.640.10">
    <property type="entry name" value="Actin, Chain A, domain 4"/>
    <property type="match status" value="1"/>
</dbReference>
<dbReference type="InterPro" id="IPR004000">
    <property type="entry name" value="Actin"/>
</dbReference>
<dbReference type="InterPro" id="IPR020902">
    <property type="entry name" value="Actin/actin-like_CS"/>
</dbReference>
<dbReference type="InterPro" id="IPR004001">
    <property type="entry name" value="Actin_CS"/>
</dbReference>
<dbReference type="InterPro" id="IPR043129">
    <property type="entry name" value="ATPase_NBD"/>
</dbReference>
<dbReference type="PANTHER" id="PTHR11937">
    <property type="entry name" value="ACTIN"/>
    <property type="match status" value="1"/>
</dbReference>
<dbReference type="Pfam" id="PF00022">
    <property type="entry name" value="Actin"/>
    <property type="match status" value="1"/>
</dbReference>
<dbReference type="PRINTS" id="PR00190">
    <property type="entry name" value="ACTIN"/>
</dbReference>
<dbReference type="SMART" id="SM00268">
    <property type="entry name" value="ACTIN"/>
    <property type="match status" value="1"/>
</dbReference>
<dbReference type="SUPFAM" id="SSF53067">
    <property type="entry name" value="Actin-like ATPase domain"/>
    <property type="match status" value="2"/>
</dbReference>
<dbReference type="PROSITE" id="PS00406">
    <property type="entry name" value="ACTINS_1"/>
    <property type="match status" value="1"/>
</dbReference>
<dbReference type="PROSITE" id="PS00432">
    <property type="entry name" value="ACTINS_2"/>
    <property type="match status" value="1"/>
</dbReference>
<dbReference type="PROSITE" id="PS01132">
    <property type="entry name" value="ACTINS_ACT_LIKE"/>
    <property type="match status" value="1"/>
</dbReference>
<reference key="1">
    <citation type="submission" date="1997-07" db="EMBL/GenBank/DDBJ databases">
        <title>Sequence of a full length Atlantic Salmon (Salmo salar) beta actin cDNA.</title>
        <authorList>
            <person name="Rogers S.A."/>
            <person name="Llewellyn L."/>
            <person name="Sweeney G.E."/>
            <person name="Wigham T."/>
        </authorList>
    </citation>
    <scope>NUCLEOTIDE SEQUENCE [MRNA]</scope>
</reference>
<sequence length="375" mass="41783">MEDEIAALVVDNGSGMCKAGFAGDDAPRAVFPSIVGRPRHQGVMVGMGQKDSYVGDEAQSKRGILTLKYPIEHGIVTNWDDMEKIWHHTFYNELRVAPEEHPVLLTEAPLNPKANREKMTQIMFETFNTPAMYVAIQAVLSLYASGRTTGIVMDSGDGVTHTVPIYEGYALPHAILRLDLAGRDLTDYLMKILTERGYSFTTTAEREIVRDIKEKLCYVALDFEQEMGTAASSSSLEKSYELPDGQVITIGNERFRCPEALFQPSFLGMESCGIHETTYNSIMKCDVDIRKDLYANTVLSGGTTMYPGIADRMQKEITSLAPSTMKIKIIAPPERKYSVWIGGSILASLSTFQQMWISKQEYDESGPSIVHRKCF</sequence>
<protein>
    <recommendedName>
        <fullName>Actin, cytoplasmic 1</fullName>
        <ecNumber evidence="5">3.6.4.-</ecNumber>
    </recommendedName>
    <alternativeName>
        <fullName>Beta-actin</fullName>
    </alternativeName>
    <component>
        <recommendedName>
            <fullName>Actin, cytoplasmic 1, N-terminally processed</fullName>
        </recommendedName>
    </component>
</protein>